<organism>
    <name type="scientific">Nitrobacter winogradskyi (strain ATCC 25391 / DSM 10237 / CIP 104748 / NCIMB 11846 / Nb-255)</name>
    <dbReference type="NCBI Taxonomy" id="323098"/>
    <lineage>
        <taxon>Bacteria</taxon>
        <taxon>Pseudomonadati</taxon>
        <taxon>Pseudomonadota</taxon>
        <taxon>Alphaproteobacteria</taxon>
        <taxon>Hyphomicrobiales</taxon>
        <taxon>Nitrobacteraceae</taxon>
        <taxon>Nitrobacter</taxon>
    </lineage>
</organism>
<evidence type="ECO:0000255" key="1">
    <source>
        <dbReference type="HAMAP-Rule" id="MF_00651"/>
    </source>
</evidence>
<feature type="chain" id="PRO_0000257555" description="Putative pre-16S rRNA nuclease">
    <location>
        <begin position="1"/>
        <end position="163"/>
    </location>
</feature>
<protein>
    <recommendedName>
        <fullName evidence="1">Putative pre-16S rRNA nuclease</fullName>
        <ecNumber evidence="1">3.1.-.-</ecNumber>
    </recommendedName>
</protein>
<proteinExistence type="inferred from homology"/>
<keyword id="KW-0963">Cytoplasm</keyword>
<keyword id="KW-0378">Hydrolase</keyword>
<keyword id="KW-0540">Nuclease</keyword>
<keyword id="KW-1185">Reference proteome</keyword>
<keyword id="KW-0690">Ribosome biogenesis</keyword>
<reference key="1">
    <citation type="journal article" date="2006" name="Appl. Environ. Microbiol.">
        <title>Genome sequence of the chemolithoautotrophic nitrite-oxidizing bacterium Nitrobacter winogradskyi Nb-255.</title>
        <authorList>
            <person name="Starkenburg S.R."/>
            <person name="Chain P.S.G."/>
            <person name="Sayavedra-Soto L.A."/>
            <person name="Hauser L."/>
            <person name="Land M.L."/>
            <person name="Larimer F.W."/>
            <person name="Malfatti S.A."/>
            <person name="Klotz M.G."/>
            <person name="Bottomley P.J."/>
            <person name="Arp D.J."/>
            <person name="Hickey W.J."/>
        </authorList>
    </citation>
    <scope>NUCLEOTIDE SEQUENCE [LARGE SCALE GENOMIC DNA]</scope>
    <source>
        <strain>ATCC 25391 / DSM 10237 / CIP 104748 / NCIMB 11846 / Nb-255</strain>
    </source>
</reference>
<comment type="function">
    <text evidence="1">Could be a nuclease involved in processing of the 5'-end of pre-16S rRNA.</text>
</comment>
<comment type="subcellular location">
    <subcellularLocation>
        <location evidence="1">Cytoplasm</location>
    </subcellularLocation>
</comment>
<comment type="similarity">
    <text evidence="1">Belongs to the YqgF nuclease family.</text>
</comment>
<dbReference type="EC" id="3.1.-.-" evidence="1"/>
<dbReference type="EMBL" id="CP000115">
    <property type="protein sequence ID" value="ABA05263.1"/>
    <property type="molecule type" value="Genomic_DNA"/>
</dbReference>
<dbReference type="RefSeq" id="WP_011315249.1">
    <property type="nucleotide sequence ID" value="NC_007406.1"/>
</dbReference>
<dbReference type="SMR" id="Q3SR28"/>
<dbReference type="STRING" id="323098.Nwi_2004"/>
<dbReference type="KEGG" id="nwi:Nwi_2004"/>
<dbReference type="eggNOG" id="COG0816">
    <property type="taxonomic scope" value="Bacteria"/>
</dbReference>
<dbReference type="HOGENOM" id="CLU_098240_1_1_5"/>
<dbReference type="OrthoDB" id="9796140at2"/>
<dbReference type="Proteomes" id="UP000002531">
    <property type="component" value="Chromosome"/>
</dbReference>
<dbReference type="GO" id="GO:0005829">
    <property type="term" value="C:cytosol"/>
    <property type="evidence" value="ECO:0007669"/>
    <property type="project" value="TreeGrafter"/>
</dbReference>
<dbReference type="GO" id="GO:0004518">
    <property type="term" value="F:nuclease activity"/>
    <property type="evidence" value="ECO:0007669"/>
    <property type="project" value="UniProtKB-KW"/>
</dbReference>
<dbReference type="GO" id="GO:0000967">
    <property type="term" value="P:rRNA 5'-end processing"/>
    <property type="evidence" value="ECO:0007669"/>
    <property type="project" value="UniProtKB-UniRule"/>
</dbReference>
<dbReference type="CDD" id="cd16964">
    <property type="entry name" value="YqgF"/>
    <property type="match status" value="1"/>
</dbReference>
<dbReference type="Gene3D" id="3.30.420.140">
    <property type="entry name" value="YqgF/RNase H-like domain"/>
    <property type="match status" value="1"/>
</dbReference>
<dbReference type="HAMAP" id="MF_00651">
    <property type="entry name" value="Nuclease_YqgF"/>
    <property type="match status" value="1"/>
</dbReference>
<dbReference type="InterPro" id="IPR012337">
    <property type="entry name" value="RNaseH-like_sf"/>
</dbReference>
<dbReference type="InterPro" id="IPR005227">
    <property type="entry name" value="YqgF"/>
</dbReference>
<dbReference type="InterPro" id="IPR006641">
    <property type="entry name" value="YqgF/RNaseH-like_dom"/>
</dbReference>
<dbReference type="InterPro" id="IPR037027">
    <property type="entry name" value="YqgF/RNaseH-like_dom_sf"/>
</dbReference>
<dbReference type="NCBIfam" id="TIGR00250">
    <property type="entry name" value="RNAse_H_YqgF"/>
    <property type="match status" value="1"/>
</dbReference>
<dbReference type="PANTHER" id="PTHR33317">
    <property type="entry name" value="POLYNUCLEOTIDYL TRANSFERASE, RIBONUCLEASE H-LIKE SUPERFAMILY PROTEIN"/>
    <property type="match status" value="1"/>
</dbReference>
<dbReference type="PANTHER" id="PTHR33317:SF4">
    <property type="entry name" value="POLYNUCLEOTIDYL TRANSFERASE, RIBONUCLEASE H-LIKE SUPERFAMILY PROTEIN"/>
    <property type="match status" value="1"/>
</dbReference>
<dbReference type="Pfam" id="PF03652">
    <property type="entry name" value="RuvX"/>
    <property type="match status" value="1"/>
</dbReference>
<dbReference type="SMART" id="SM00732">
    <property type="entry name" value="YqgFc"/>
    <property type="match status" value="1"/>
</dbReference>
<dbReference type="SUPFAM" id="SSF53098">
    <property type="entry name" value="Ribonuclease H-like"/>
    <property type="match status" value="1"/>
</dbReference>
<sequence length="163" mass="17479">MPASVLPLVEAAAHWPARGALVGLDLGTKTIGVAVSDPDRRLATGVETIRRKTFTADAARLLAIAGERRAEGFILGLPINMDGSEGPRAQSTRAFARNLARLTDFAIGLWDERLSTAAVERELIGLDMSRARRAKVIDEHAAIFILQGALDRLATQRRTSGPG</sequence>
<gene>
    <name type="ordered locus">Nwi_2004</name>
</gene>
<name>YQGF_NITWN</name>
<accession>Q3SR28</accession>